<protein>
    <recommendedName>
        <fullName evidence="8">Bifunctional glutamate/proline--tRNA ligase</fullName>
    </recommendedName>
    <alternativeName>
        <fullName>Bifunctional aminoacyl-tRNA synthetase</fullName>
    </alternativeName>
    <alternativeName>
        <fullName evidence="7">Glutamyl-prolyl-tRNA synthetase</fullName>
    </alternativeName>
    <domain>
        <recommendedName>
            <fullName evidence="1">Glutamate--tRNA ligase</fullName>
            <ecNumber evidence="1">6.1.1.17</ecNumber>
        </recommendedName>
        <alternativeName>
            <fullName evidence="1">Glutamyl-tRNA synthetase</fullName>
            <shortName evidence="1">GluRS</shortName>
        </alternativeName>
    </domain>
    <domain>
        <recommendedName>
            <fullName evidence="1">Proline--tRNA ligase</fullName>
            <ecNumber evidence="1">6.1.1.15</ecNumber>
        </recommendedName>
        <alternativeName>
            <fullName>Prolyl-tRNA synthetase</fullName>
            <shortName>ProRS</shortName>
        </alternativeName>
    </domain>
</protein>
<accession>Q7SIA2</accession>
<accession>Q7SIG9</accession>
<reference key="1">
    <citation type="journal article" date="2011" name="Nat. Biotechnol.">
        <title>The genomic sequence of the Chinese hamster ovary (CHO)-K1 cell line.</title>
        <authorList>
            <person name="Xu X."/>
            <person name="Nagarajan H."/>
            <person name="Lewis N.E."/>
            <person name="Pan S."/>
            <person name="Cai Z."/>
            <person name="Liu X."/>
            <person name="Chen W."/>
            <person name="Xie M."/>
            <person name="Wang W."/>
            <person name="Hammond S."/>
            <person name="Andersen M.R."/>
            <person name="Neff N."/>
            <person name="Passarelli B."/>
            <person name="Koh W."/>
            <person name="Fan H.C."/>
            <person name="Wang J."/>
            <person name="Gui Y."/>
            <person name="Lee K.H."/>
            <person name="Betenbaugh M.J."/>
            <person name="Quake S.R."/>
            <person name="Famili I."/>
            <person name="Palsson B.O."/>
            <person name="Wang J."/>
        </authorList>
    </citation>
    <scope>NUCLEOTIDE SEQUENCE [LARGE SCALE GENOMIC DNA]</scope>
</reference>
<reference key="2">
    <citation type="journal article" date="2000" name="EMBO J.">
        <title>A recurrent RNA-binding domain is appended to eukaryotic aminoacyl-tRNA synthetases.</title>
        <authorList>
            <person name="Cahuzac B."/>
            <person name="Berthonneau E."/>
            <person name="Birlirakis N."/>
            <person name="Guittet E."/>
            <person name="Mirande M."/>
        </authorList>
    </citation>
    <scope>STRUCTURE BY NMR OF 826-874</scope>
    <scope>DOMAIN</scope>
</reference>
<name>SYEP_CRIGR</name>
<organism>
    <name type="scientific">Cricetulus griseus</name>
    <name type="common">Chinese hamster</name>
    <name type="synonym">Cricetulus barabensis griseus</name>
    <dbReference type="NCBI Taxonomy" id="10029"/>
    <lineage>
        <taxon>Eukaryota</taxon>
        <taxon>Metazoa</taxon>
        <taxon>Chordata</taxon>
        <taxon>Craniata</taxon>
        <taxon>Vertebrata</taxon>
        <taxon>Euteleostomi</taxon>
        <taxon>Mammalia</taxon>
        <taxon>Eutheria</taxon>
        <taxon>Euarchontoglires</taxon>
        <taxon>Glires</taxon>
        <taxon>Rodentia</taxon>
        <taxon>Myomorpha</taxon>
        <taxon>Muroidea</taxon>
        <taxon>Cricetidae</taxon>
        <taxon>Cricetinae</taxon>
        <taxon>Cricetulus</taxon>
    </lineage>
</organism>
<proteinExistence type="evidence at protein level"/>
<sequence length="1511" mass="169781">MAALCLTVNAGDPPLDALLAVEHVKGDVSVSVEEGKENLLRVSEDVVFTDINSILRYLARVATTSGLYGTNLMEHTEIDHWLEFSATKLSSCAALTSALTELNHCLSLRTYLVGNSLTLADLCVWATLKGNAAWQEQLEQNKTLVHVKRWFGFLEAQQAFRSVGTKWDVSENKARVVPDKKQDVGKFVELPGAEMGKVTVRFPPEASGYLHIGHAKAALLNQHYQVNFKGKLIMRFDDTNPEKEKEDFEKVILEDVAMLHIKPDQFTYTSDHFETIMKYAEKLIQEGKAYVDDTPAEQMKAEREQRAESKHRQNSVEKNLQMWEEMKKGSPFGQSCCLRAKIDMSSNNGCMRDPTLYRCKIQPHPRTGNKYNVYPTYDFACPIVDSIEGVTHALRTTEYHDRDEQFYWIIEALGIRKPYIWEYSRLNLNNTVLSKRKLTWFVNEGLVDGWDDPRFPTVRGVLRRGMTVEGLKQFIAAQGSSRSVVNMEWDKIWAFNKKVIDPVAPRYVALLKKEVVPVNVPEAQEEMKEVARHPKNPDVGLKPVWYSPKVFIEGADAETFSEGEMVTFINWGNINITKIHKNADGKITSLDAKLNLENKDYKKTTKITWLAETTHALPIPAICVTYEHLITKPVLGKDEDFKQYVNKDSKHEELMLGDPCLKDLKKGDIIQLQRRGFFICDQPYEPVSPYSCKEAPCILIYIPDGHTKEMPTSGSKEKTKAEPLKKETSSAPKEGPVPAVSPCAASEESSVLYNRVAAQGDVVRELKAKKAAKEDVDAAVKQLLALKAEYKQKTGQEYKPGNPPSAAAQSASTKSLPSAGEDRSLYDKIAAQGEVVRKLKAEKAPKAKVTEAVECLLSLKAEYKEKTGKEYVPGQPPASQKSQPSPASKAEPAGPETTEAKALFDRVACQGEVVRKLKAEKASKDQVDPAVQELLQLKAQYKSLTGIEYKPVSATGSEDKDKKKKEKENKSEKQNKPQKQNDGPGKDSSKSQGGGLSSSGAGEGQGPKKQTRLGLEAKKEENLAEWYSQVITKSEMIEYYDVSGCYILRPWSYSIWESIKDFFDTEIKKLGVENCYFPIFVSQAALEKEKSHIEDFAPEVAWVTRSGKTELAEPIAIRPTSETVMYPAYAKWVQSHRDLPIRLNQWCNVVRWEFKHPQPFLRTREFLWQEGHSAFATFEEAADEVMQILELYARVYEELLAIPVVRGRKTEKEKFAGGDYTTTVEAFISASGRAIQGATSHHLGQNFSKMCEIVFEDPKTPGEKQFAFQCSWGLTTRTIGVMIMVHGDNMGLVLPPRVACVQVVVIPCGITNALSEEDREALMAKCNEYRKRLLGVNIRVRVDLRDNYSPGWKFNHWELKGVPVRLEVGPRDMKSCQFVAVRRDTGEKLTIAEKEAESKLQEILEDIQLNLFTRASEDLKTHMVVSNTLEDFQKVLDSGKIAQIPFCGEIDCEDWIKKTTARDQDVEPGAPSMGAKSLCIPFTPLCELQPGAMCVCGKNPAKFYTLFGRSY</sequence>
<comment type="function">
    <text evidence="1">Multifunctional protein which primarily functions within the aminoacyl-tRNA synthetase multienzyme complex, also known as multisynthetase complex. Within the complex it catalyzes the attachment of both L-glutamate and L-proline to their cognate tRNAs in a two-step reaction where the amino acid is first activated by ATP to form a covalent intermediate with AMP. Subsequently, the activated amino acid is transferred to the acceptor end of the cognate tRNA to form L-glutamyl-tRNA(Glu) and L-prolyl-tRNA(Pro). Upon interferon-gamma stimulation, EPRS1 undergoes phosphorylation, causing its dissociation from the aminoacyl-tRNA synthetase multienzyme complex. It is recruited to form the GAIT complex, which binds to stem loop-containing GAIT elements found in the 3'-UTR of various inflammatory mRNAs, such as ceruloplasmin. The GAIT complex inhibits the translation of these mRNAs, allowing interferon-gamma to redirect the function of EPRS1 from protein synthesis to translation inhibition in specific cell contexts. Furthermore, it can function as a downstream effector in the mTORC1 signaling pathway, by promoting the translocation of SLC27A1 from the cytoplasm to the plasma membrane where it mediates the uptake of long-chain fatty acid by adipocytes. Thereby, EPRS1 also plays a role in fat metabolism and more indirectly influences lifespan.</text>
</comment>
<comment type="catalytic activity">
    <reaction evidence="1">
        <text>tRNA(Glu) + L-glutamate + ATP = L-glutamyl-tRNA(Glu) + AMP + diphosphate</text>
        <dbReference type="Rhea" id="RHEA:23540"/>
        <dbReference type="Rhea" id="RHEA-COMP:9663"/>
        <dbReference type="Rhea" id="RHEA-COMP:9680"/>
        <dbReference type="ChEBI" id="CHEBI:29985"/>
        <dbReference type="ChEBI" id="CHEBI:30616"/>
        <dbReference type="ChEBI" id="CHEBI:33019"/>
        <dbReference type="ChEBI" id="CHEBI:78442"/>
        <dbReference type="ChEBI" id="CHEBI:78520"/>
        <dbReference type="ChEBI" id="CHEBI:456215"/>
        <dbReference type="EC" id="6.1.1.17"/>
    </reaction>
    <physiologicalReaction direction="left-to-right" evidence="1">
        <dbReference type="Rhea" id="RHEA:23541"/>
    </physiologicalReaction>
</comment>
<comment type="catalytic activity">
    <reaction evidence="1">
        <text>tRNA(Pro) + L-proline + ATP = L-prolyl-tRNA(Pro) + AMP + diphosphate</text>
        <dbReference type="Rhea" id="RHEA:14305"/>
        <dbReference type="Rhea" id="RHEA-COMP:9700"/>
        <dbReference type="Rhea" id="RHEA-COMP:9702"/>
        <dbReference type="ChEBI" id="CHEBI:30616"/>
        <dbReference type="ChEBI" id="CHEBI:33019"/>
        <dbReference type="ChEBI" id="CHEBI:60039"/>
        <dbReference type="ChEBI" id="CHEBI:78442"/>
        <dbReference type="ChEBI" id="CHEBI:78532"/>
        <dbReference type="ChEBI" id="CHEBI:456215"/>
        <dbReference type="EC" id="6.1.1.15"/>
    </reaction>
    <physiologicalReaction direction="left-to-right" evidence="1">
        <dbReference type="Rhea" id="RHEA:14306"/>
    </physiologicalReaction>
</comment>
<comment type="subunit">
    <text evidence="1">Homodimer. Part of the aminoacyl-tRNA synthetase multienzyme complex, also know as multisynthetase complex, that is composed of the tRNA ligases for Arg (RARS1), Asp (DARS1), Gln (QARS1), Ile (IARS1), Leu (LARS1), Lys (KARS1), Met (MARS1) the bifunctional ligase for Glu and Pro (EPRS1) and the auxiliary subunits AIMP1/p43, AIMP2/p38 and EEF1E1/p18. Forms a linear complex that contains MARS1, EEF1E1, EPRS1 and AIMP2 that is at the core of the multisubunit complex. Interacts with TARS3. Interacts with DUS2L. Component of the GAIT complex which is composed of EPRS1, RPL13A and GAPDH. Interacts (phosphorylated at Ser-998) with SLC27A1; mediates the translocation of SLC27A1 from the cytoplasm to the plasma membrane thereby increasing the uptake of long-chain fatty acids.</text>
</comment>
<comment type="subcellular location">
    <subcellularLocation>
        <location evidence="1">Cytoplasm</location>
        <location evidence="1">Cytosol</location>
    </subcellularLocation>
    <subcellularLocation>
        <location evidence="1">Membrane</location>
        <topology evidence="1">Peripheral membrane protein</topology>
    </subcellularLocation>
    <text evidence="1">Translocates from cytosol to membranes upon phosphorylation at Ser-998.</text>
</comment>
<comment type="domain">
    <text evidence="6">The WHEP-TRS domains are involved in RNA binding.</text>
</comment>
<comment type="PTM">
    <text evidence="1">Phosphorylated at Ser-998 by RPS6KB1; triggers EPRS1 release from the aminoacyl-tRNA synthetase multienzyme complex. In monocytes, the IFN-gamma-induced phosphorylation at Ser-998 releases EPRS1 from the aminoacyl-tRNA synthetase multienzyme complex, allowing its association with the GAIT complex. Phosphorylation at Ser-998 is specifically required for the RPL13A-mediated interaction of the GAIT complex with eIF4G. Phosphorylation at Ser-998 by RPS6KB1, is also induced by insulin through activation of the mTORC1 signaling pathway and promotes the interaction of EPRS1 with SLC27A1.</text>
</comment>
<comment type="similarity">
    <text evidence="8">In the N-terminal section; belongs to the class-I aminoacyl-tRNA synthetase family. Glutamate--tRNA ligase type 2 subfamily.</text>
</comment>
<comment type="similarity">
    <text evidence="8">In the C-terminal section; belongs to the class-II aminoacyl-tRNA synthetase family.</text>
</comment>
<evidence type="ECO:0000250" key="1">
    <source>
        <dbReference type="UniProtKB" id="P07814"/>
    </source>
</evidence>
<evidence type="ECO:0000250" key="2">
    <source>
        <dbReference type="UniProtKB" id="P28668"/>
    </source>
</evidence>
<evidence type="ECO:0000250" key="3">
    <source>
        <dbReference type="UniProtKB" id="Q8CGC7"/>
    </source>
</evidence>
<evidence type="ECO:0000255" key="4">
    <source>
        <dbReference type="PROSITE-ProRule" id="PRU00531"/>
    </source>
</evidence>
<evidence type="ECO:0000256" key="5">
    <source>
        <dbReference type="SAM" id="MobiDB-lite"/>
    </source>
</evidence>
<evidence type="ECO:0000269" key="6">
    <source>
    </source>
</evidence>
<evidence type="ECO:0000303" key="7">
    <source>
    </source>
</evidence>
<evidence type="ECO:0000305" key="8"/>
<evidence type="ECO:0007829" key="9">
    <source>
        <dbReference type="PDB" id="1D2D"/>
    </source>
</evidence>
<keyword id="KW-0002">3D-structure</keyword>
<keyword id="KW-0007">Acetylation</keyword>
<keyword id="KW-0030">Aminoacyl-tRNA synthetase</keyword>
<keyword id="KW-0067">ATP-binding</keyword>
<keyword id="KW-0963">Cytoplasm</keyword>
<keyword id="KW-0436">Ligase</keyword>
<keyword id="KW-0460">Magnesium</keyword>
<keyword id="KW-0472">Membrane</keyword>
<keyword id="KW-0479">Metal-binding</keyword>
<keyword id="KW-0488">Methylation</keyword>
<keyword id="KW-0511">Multifunctional enzyme</keyword>
<keyword id="KW-0547">Nucleotide-binding</keyword>
<keyword id="KW-0597">Phosphoprotein</keyword>
<keyword id="KW-0648">Protein biosynthesis</keyword>
<keyword id="KW-0694">RNA-binding</keyword>
<keyword id="KW-0810">Translation regulation</keyword>
<keyword id="KW-0862">Zinc</keyword>
<gene>
    <name evidence="1" type="primary">EPRS1</name>
    <name evidence="7" type="synonym">EPRS</name>
    <name type="synonym">QPRS</name>
</gene>
<dbReference type="EC" id="6.1.1.17" evidence="1"/>
<dbReference type="EC" id="6.1.1.15" evidence="1"/>
<dbReference type="EMBL" id="AMDS01047676">
    <property type="status" value="NOT_ANNOTATED_CDS"/>
    <property type="molecule type" value="Genomic_DNA"/>
</dbReference>
<dbReference type="EMBL" id="AMDS01047677">
    <property type="status" value="NOT_ANNOTATED_CDS"/>
    <property type="molecule type" value="Genomic_DNA"/>
</dbReference>
<dbReference type="EMBL" id="AMDS01047678">
    <property type="status" value="NOT_ANNOTATED_CDS"/>
    <property type="molecule type" value="Genomic_DNA"/>
</dbReference>
<dbReference type="EMBL" id="AMDS01047679">
    <property type="status" value="NOT_ANNOTATED_CDS"/>
    <property type="molecule type" value="Genomic_DNA"/>
</dbReference>
<dbReference type="EMBL" id="AMDS01047680">
    <property type="status" value="NOT_ANNOTATED_CDS"/>
    <property type="molecule type" value="Genomic_DNA"/>
</dbReference>
<dbReference type="PDB" id="1D2D">
    <property type="method" value="NMR"/>
    <property type="chains" value="A=826-874"/>
</dbReference>
<dbReference type="PDB" id="1R1B">
    <property type="method" value="NMR"/>
    <property type="chains" value="A=826-874"/>
</dbReference>
<dbReference type="PDBsum" id="1D2D"/>
<dbReference type="PDBsum" id="1R1B"/>
<dbReference type="SMR" id="Q7SIA2"/>
<dbReference type="PaxDb" id="10029-XP_007636777.1"/>
<dbReference type="Ensembl" id="ENSCGRT00001011517.1">
    <property type="protein sequence ID" value="ENSCGRP00001007475.1"/>
    <property type="gene ID" value="ENSCGRG00001009885.1"/>
</dbReference>
<dbReference type="eggNOG" id="KOG1147">
    <property type="taxonomic scope" value="Eukaryota"/>
</dbReference>
<dbReference type="eggNOG" id="KOG4163">
    <property type="taxonomic scope" value="Eukaryota"/>
</dbReference>
<dbReference type="GeneTree" id="ENSGT00550000074815"/>
<dbReference type="OrthoDB" id="1350766at2759"/>
<dbReference type="EvolutionaryTrace" id="Q7SIA2"/>
<dbReference type="Proteomes" id="UP000694386">
    <property type="component" value="Unplaced"/>
</dbReference>
<dbReference type="Proteomes" id="UP001108280">
    <property type="component" value="Unplaced"/>
</dbReference>
<dbReference type="GO" id="GO:0017101">
    <property type="term" value="C:aminoacyl-tRNA synthetase multienzyme complex"/>
    <property type="evidence" value="ECO:0000250"/>
    <property type="project" value="UniProtKB"/>
</dbReference>
<dbReference type="GO" id="GO:0005829">
    <property type="term" value="C:cytosol"/>
    <property type="evidence" value="ECO:0000250"/>
    <property type="project" value="UniProtKB"/>
</dbReference>
<dbReference type="GO" id="GO:0097452">
    <property type="term" value="C:GAIT complex"/>
    <property type="evidence" value="ECO:0000250"/>
    <property type="project" value="UniProtKB"/>
</dbReference>
<dbReference type="GO" id="GO:0005886">
    <property type="term" value="C:plasma membrane"/>
    <property type="evidence" value="ECO:0000250"/>
    <property type="project" value="UniProtKB"/>
</dbReference>
<dbReference type="GO" id="GO:1990904">
    <property type="term" value="C:ribonucleoprotein complex"/>
    <property type="evidence" value="ECO:0007669"/>
    <property type="project" value="Ensembl"/>
</dbReference>
<dbReference type="GO" id="GO:0005524">
    <property type="term" value="F:ATP binding"/>
    <property type="evidence" value="ECO:0007669"/>
    <property type="project" value="UniProtKB-KW"/>
</dbReference>
<dbReference type="GO" id="GO:0004818">
    <property type="term" value="F:glutamate-tRNA ligase activity"/>
    <property type="evidence" value="ECO:0000250"/>
    <property type="project" value="UniProtKB"/>
</dbReference>
<dbReference type="GO" id="GO:0051020">
    <property type="term" value="F:GTPase binding"/>
    <property type="evidence" value="ECO:0007669"/>
    <property type="project" value="Ensembl"/>
</dbReference>
<dbReference type="GO" id="GO:0004827">
    <property type="term" value="F:proline-tRNA ligase activity"/>
    <property type="evidence" value="ECO:0000250"/>
    <property type="project" value="UniProtKB"/>
</dbReference>
<dbReference type="GO" id="GO:0042803">
    <property type="term" value="F:protein homodimerization activity"/>
    <property type="evidence" value="ECO:0007669"/>
    <property type="project" value="Ensembl"/>
</dbReference>
<dbReference type="GO" id="GO:0035613">
    <property type="term" value="F:RNA stem-loop binding"/>
    <property type="evidence" value="ECO:0000250"/>
    <property type="project" value="UniProtKB"/>
</dbReference>
<dbReference type="GO" id="GO:0008270">
    <property type="term" value="F:zinc ion binding"/>
    <property type="evidence" value="ECO:0000250"/>
    <property type="project" value="UniProtKB"/>
</dbReference>
<dbReference type="GO" id="GO:0032869">
    <property type="term" value="P:cellular response to insulin stimulus"/>
    <property type="evidence" value="ECO:0000250"/>
    <property type="project" value="UniProtKB"/>
</dbReference>
<dbReference type="GO" id="GO:0071346">
    <property type="term" value="P:cellular response to type II interferon"/>
    <property type="evidence" value="ECO:0007669"/>
    <property type="project" value="Ensembl"/>
</dbReference>
<dbReference type="GO" id="GO:0006424">
    <property type="term" value="P:glutamyl-tRNA aminoacylation"/>
    <property type="evidence" value="ECO:0000250"/>
    <property type="project" value="UniProtKB"/>
</dbReference>
<dbReference type="GO" id="GO:0017148">
    <property type="term" value="P:negative regulation of translation"/>
    <property type="evidence" value="ECO:0007669"/>
    <property type="project" value="Ensembl"/>
</dbReference>
<dbReference type="GO" id="GO:0006433">
    <property type="term" value="P:prolyl-tRNA aminoacylation"/>
    <property type="evidence" value="ECO:0000250"/>
    <property type="project" value="UniProtKB"/>
</dbReference>
<dbReference type="GO" id="GO:0140212">
    <property type="term" value="P:regulation of long-chain fatty acid import into cell"/>
    <property type="evidence" value="ECO:0000250"/>
    <property type="project" value="UniProtKB"/>
</dbReference>
<dbReference type="CDD" id="cd00807">
    <property type="entry name" value="GlnRS_core"/>
    <property type="match status" value="1"/>
</dbReference>
<dbReference type="CDD" id="cd10309">
    <property type="entry name" value="GST_C_GluProRS_N"/>
    <property type="match status" value="1"/>
</dbReference>
<dbReference type="CDD" id="cd00862">
    <property type="entry name" value="ProRS_anticodon_zinc"/>
    <property type="match status" value="1"/>
</dbReference>
<dbReference type="CDD" id="cd00778">
    <property type="entry name" value="ProRS_core_arch_euk"/>
    <property type="match status" value="1"/>
</dbReference>
<dbReference type="CDD" id="cd00936">
    <property type="entry name" value="WEPRS_RNA"/>
    <property type="match status" value="3"/>
</dbReference>
<dbReference type="FunFam" id="1.10.287.10:FF:000006">
    <property type="entry name" value="Bifunctional glutamate/proline--tRNA ligase"/>
    <property type="match status" value="1"/>
</dbReference>
<dbReference type="FunFam" id="1.20.1050.130:FF:000004">
    <property type="entry name" value="Bifunctional glutamate/proline--tRNA ligase"/>
    <property type="match status" value="1"/>
</dbReference>
<dbReference type="FunFam" id="2.40.240.10:FF:000005">
    <property type="entry name" value="Bifunctional glutamate/proline--tRNA ligase"/>
    <property type="match status" value="1"/>
</dbReference>
<dbReference type="FunFam" id="3.30.110.30:FF:000001">
    <property type="entry name" value="Bifunctional glutamate/proline--tRNA ligase"/>
    <property type="match status" value="1"/>
</dbReference>
<dbReference type="FunFam" id="3.30.930.10:FF:000007">
    <property type="entry name" value="Bifunctional glutamate/proline--tRNA ligase"/>
    <property type="match status" value="1"/>
</dbReference>
<dbReference type="FunFam" id="3.40.50.620:FF:000070">
    <property type="entry name" value="Bifunctional glutamate/proline--tRNA ligase"/>
    <property type="match status" value="1"/>
</dbReference>
<dbReference type="FunFam" id="1.10.287.10:FF:000004">
    <property type="entry name" value="bifunctional glutamate/proline--tRNA ligase"/>
    <property type="match status" value="2"/>
</dbReference>
<dbReference type="FunFam" id="2.40.240.10:FF:000014">
    <property type="entry name" value="bifunctional glutamate/proline--tRNA ligase"/>
    <property type="match status" value="1"/>
</dbReference>
<dbReference type="FunFam" id="3.40.50.800:FF:000005">
    <property type="entry name" value="bifunctional glutamate/proline--tRNA ligase"/>
    <property type="match status" value="1"/>
</dbReference>
<dbReference type="Gene3D" id="1.20.1050.130">
    <property type="match status" value="1"/>
</dbReference>
<dbReference type="Gene3D" id="3.40.50.800">
    <property type="entry name" value="Anticodon-binding domain"/>
    <property type="match status" value="1"/>
</dbReference>
<dbReference type="Gene3D" id="3.30.930.10">
    <property type="entry name" value="Bira Bifunctional Protein, Domain 2"/>
    <property type="match status" value="1"/>
</dbReference>
<dbReference type="Gene3D" id="3.30.110.30">
    <property type="entry name" value="C-terminal domain of ProRS"/>
    <property type="match status" value="1"/>
</dbReference>
<dbReference type="Gene3D" id="3.40.50.620">
    <property type="entry name" value="HUPs"/>
    <property type="match status" value="1"/>
</dbReference>
<dbReference type="Gene3D" id="2.40.240.10">
    <property type="entry name" value="Ribosomal Protein L25, Chain P"/>
    <property type="match status" value="2"/>
</dbReference>
<dbReference type="Gene3D" id="1.10.287.10">
    <property type="entry name" value="S15/NS1, RNA-binding"/>
    <property type="match status" value="3"/>
</dbReference>
<dbReference type="HAMAP" id="MF_02076">
    <property type="entry name" value="Glu_tRNA_synth_type2"/>
    <property type="match status" value="1"/>
</dbReference>
<dbReference type="HAMAP" id="MF_01571">
    <property type="entry name" value="Pro_tRNA_synth_type3"/>
    <property type="match status" value="1"/>
</dbReference>
<dbReference type="InterPro" id="IPR002314">
    <property type="entry name" value="aa-tRNA-synt_IIb"/>
</dbReference>
<dbReference type="InterPro" id="IPR001412">
    <property type="entry name" value="aa-tRNA-synth_I_CS"/>
</dbReference>
<dbReference type="InterPro" id="IPR006195">
    <property type="entry name" value="aa-tRNA-synth_II"/>
</dbReference>
<dbReference type="InterPro" id="IPR045864">
    <property type="entry name" value="aa-tRNA-synth_II/BPL/LPL"/>
</dbReference>
<dbReference type="InterPro" id="IPR004154">
    <property type="entry name" value="Anticodon-bd"/>
</dbReference>
<dbReference type="InterPro" id="IPR036621">
    <property type="entry name" value="Anticodon-bd_dom_sf"/>
</dbReference>
<dbReference type="InterPro" id="IPR053836">
    <property type="entry name" value="Arc1-like_N"/>
</dbReference>
<dbReference type="InterPro" id="IPR004526">
    <property type="entry name" value="Glu-tRNA-synth_arc/euk"/>
</dbReference>
<dbReference type="InterPro" id="IPR000924">
    <property type="entry name" value="Glu/Gln-tRNA-synth"/>
</dbReference>
<dbReference type="InterPro" id="IPR020058">
    <property type="entry name" value="Glu/Gln-tRNA-synth_Ib_cat-dom"/>
</dbReference>
<dbReference type="InterPro" id="IPR020059">
    <property type="entry name" value="Glu/Gln-tRNA-synth_Ib_codon-bd"/>
</dbReference>
<dbReference type="InterPro" id="IPR036282">
    <property type="entry name" value="Glutathione-S-Trfase_C_sf"/>
</dbReference>
<dbReference type="InterPro" id="IPR004499">
    <property type="entry name" value="Pro-tRNA-ligase_IIa_arc-type"/>
</dbReference>
<dbReference type="InterPro" id="IPR016061">
    <property type="entry name" value="Pro-tRNA_ligase_II_C"/>
</dbReference>
<dbReference type="InterPro" id="IPR017449">
    <property type="entry name" value="Pro-tRNA_synth_II"/>
</dbReference>
<dbReference type="InterPro" id="IPR033721">
    <property type="entry name" value="ProRS_core_arch_euk"/>
</dbReference>
<dbReference type="InterPro" id="IPR020056">
    <property type="entry name" value="Rbsml_bL25/Gln-tRNA_synth_N"/>
</dbReference>
<dbReference type="InterPro" id="IPR011035">
    <property type="entry name" value="Ribosomal_bL25/Gln-tRNA_synth"/>
</dbReference>
<dbReference type="InterPro" id="IPR014729">
    <property type="entry name" value="Rossmann-like_a/b/a_fold"/>
</dbReference>
<dbReference type="InterPro" id="IPR049437">
    <property type="entry name" value="tRNA-synt_1c_C2"/>
</dbReference>
<dbReference type="InterPro" id="IPR009068">
    <property type="entry name" value="uS15_NS1_RNA-bd_sf"/>
</dbReference>
<dbReference type="InterPro" id="IPR000738">
    <property type="entry name" value="WHEP-TRS_dom"/>
</dbReference>
<dbReference type="NCBIfam" id="TIGR00463">
    <property type="entry name" value="gltX_arch"/>
    <property type="match status" value="1"/>
</dbReference>
<dbReference type="NCBIfam" id="TIGR00408">
    <property type="entry name" value="proS_fam_I"/>
    <property type="match status" value="1"/>
</dbReference>
<dbReference type="PANTHER" id="PTHR43382:SF2">
    <property type="entry name" value="BIFUNCTIONAL GLUTAMATE_PROLINE--TRNA LIGASE"/>
    <property type="match status" value="1"/>
</dbReference>
<dbReference type="PANTHER" id="PTHR43382">
    <property type="entry name" value="PROLYL-TRNA SYNTHETASE"/>
    <property type="match status" value="1"/>
</dbReference>
<dbReference type="Pfam" id="PF21972">
    <property type="entry name" value="Arc1p_N_like"/>
    <property type="match status" value="1"/>
</dbReference>
<dbReference type="Pfam" id="PF03129">
    <property type="entry name" value="HGTP_anticodon"/>
    <property type="match status" value="1"/>
</dbReference>
<dbReference type="Pfam" id="PF09180">
    <property type="entry name" value="ProRS-C_1"/>
    <property type="match status" value="1"/>
</dbReference>
<dbReference type="Pfam" id="PF00749">
    <property type="entry name" value="tRNA-synt_1c"/>
    <property type="match status" value="1"/>
</dbReference>
<dbReference type="Pfam" id="PF03950">
    <property type="entry name" value="tRNA-synt_1c_C"/>
    <property type="match status" value="1"/>
</dbReference>
<dbReference type="Pfam" id="PF20974">
    <property type="entry name" value="tRNA-synt_1c_C2"/>
    <property type="match status" value="1"/>
</dbReference>
<dbReference type="Pfam" id="PF00587">
    <property type="entry name" value="tRNA-synt_2b"/>
    <property type="match status" value="1"/>
</dbReference>
<dbReference type="Pfam" id="PF00458">
    <property type="entry name" value="WHEP-TRS"/>
    <property type="match status" value="3"/>
</dbReference>
<dbReference type="PRINTS" id="PR00987">
    <property type="entry name" value="TRNASYNTHGLU"/>
</dbReference>
<dbReference type="SMART" id="SM00946">
    <property type="entry name" value="ProRS-C_1"/>
    <property type="match status" value="1"/>
</dbReference>
<dbReference type="SMART" id="SM00991">
    <property type="entry name" value="WHEP-TRS"/>
    <property type="match status" value="3"/>
</dbReference>
<dbReference type="SUPFAM" id="SSF64586">
    <property type="entry name" value="C-terminal domain of ProRS"/>
    <property type="match status" value="1"/>
</dbReference>
<dbReference type="SUPFAM" id="SSF52954">
    <property type="entry name" value="Class II aaRS ABD-related"/>
    <property type="match status" value="1"/>
</dbReference>
<dbReference type="SUPFAM" id="SSF55681">
    <property type="entry name" value="Class II aaRS and biotin synthetases"/>
    <property type="match status" value="1"/>
</dbReference>
<dbReference type="SUPFAM" id="SSF47616">
    <property type="entry name" value="GST C-terminal domain-like"/>
    <property type="match status" value="1"/>
</dbReference>
<dbReference type="SUPFAM" id="SSF52374">
    <property type="entry name" value="Nucleotidylyl transferase"/>
    <property type="match status" value="1"/>
</dbReference>
<dbReference type="SUPFAM" id="SSF50715">
    <property type="entry name" value="Ribosomal protein L25-like"/>
    <property type="match status" value="1"/>
</dbReference>
<dbReference type="SUPFAM" id="SSF47060">
    <property type="entry name" value="S15/NS1 RNA-binding domain"/>
    <property type="match status" value="3"/>
</dbReference>
<dbReference type="PROSITE" id="PS00178">
    <property type="entry name" value="AA_TRNA_LIGASE_I"/>
    <property type="match status" value="1"/>
</dbReference>
<dbReference type="PROSITE" id="PS50862">
    <property type="entry name" value="AA_TRNA_LIGASE_II"/>
    <property type="match status" value="1"/>
</dbReference>
<dbReference type="PROSITE" id="PS00762">
    <property type="entry name" value="WHEP_TRS_1"/>
    <property type="match status" value="2"/>
</dbReference>
<dbReference type="PROSITE" id="PS51185">
    <property type="entry name" value="WHEP_TRS_2"/>
    <property type="match status" value="3"/>
</dbReference>
<feature type="chain" id="PRO_0000119742" description="Bifunctional glutamate/proline--tRNA ligase">
    <location>
        <begin position="1"/>
        <end position="1511"/>
    </location>
</feature>
<feature type="domain" description="WHEP-TRS 1" evidence="4">
    <location>
        <begin position="748"/>
        <end position="804"/>
    </location>
</feature>
<feature type="domain" description="WHEP-TRS 2" evidence="4">
    <location>
        <begin position="821"/>
        <end position="877"/>
    </location>
</feature>
<feature type="domain" description="WHEP-TRS 3" evidence="4">
    <location>
        <begin position="899"/>
        <end position="955"/>
    </location>
</feature>
<feature type="region of interest" description="Glutamate--tRNA ligase" evidence="2">
    <location>
        <begin position="164"/>
        <end position="758"/>
    </location>
</feature>
<feature type="region of interest" description="Disordered" evidence="5">
    <location>
        <begin position="296"/>
        <end position="315"/>
    </location>
</feature>
<feature type="region of interest" description="Disordered" evidence="5">
    <location>
        <begin position="708"/>
        <end position="741"/>
    </location>
</feature>
<feature type="region of interest" description="3 X 57 AA approximate repeats" evidence="1">
    <location>
        <begin position="759"/>
        <end position="955"/>
    </location>
</feature>
<feature type="region of interest" description="Disordered" evidence="5">
    <location>
        <begin position="794"/>
        <end position="823"/>
    </location>
</feature>
<feature type="region of interest" description="Disordered" evidence="5">
    <location>
        <begin position="868"/>
        <end position="903"/>
    </location>
</feature>
<feature type="region of interest" description="Disordered" evidence="5">
    <location>
        <begin position="952"/>
        <end position="1015"/>
    </location>
</feature>
<feature type="region of interest" description="Proline--tRNA ligase" evidence="2">
    <location>
        <begin position="1006"/>
        <end position="1511"/>
    </location>
</feature>
<feature type="short sequence motif" description="'HIGH' region" evidence="2">
    <location>
        <begin position="204"/>
        <end position="214"/>
    </location>
</feature>
<feature type="short sequence motif" description="'KMSKS' region" evidence="2">
    <location>
        <begin position="432"/>
        <end position="436"/>
    </location>
</feature>
<feature type="compositionally biased region" description="Basic and acidic residues" evidence="5">
    <location>
        <begin position="299"/>
        <end position="315"/>
    </location>
</feature>
<feature type="compositionally biased region" description="Basic and acidic residues" evidence="5">
    <location>
        <begin position="708"/>
        <end position="728"/>
    </location>
</feature>
<feature type="compositionally biased region" description="Polar residues" evidence="5">
    <location>
        <begin position="807"/>
        <end position="816"/>
    </location>
</feature>
<feature type="compositionally biased region" description="Low complexity" evidence="5">
    <location>
        <begin position="877"/>
        <end position="890"/>
    </location>
</feature>
<feature type="compositionally biased region" description="Basic and acidic residues" evidence="5">
    <location>
        <begin position="957"/>
        <end position="975"/>
    </location>
</feature>
<feature type="compositionally biased region" description="Gly residues" evidence="5">
    <location>
        <begin position="992"/>
        <end position="1005"/>
    </location>
</feature>
<feature type="binding site" evidence="1">
    <location>
        <begin position="1120"/>
        <end position="1122"/>
    </location>
    <ligand>
        <name>L-proline</name>
        <dbReference type="ChEBI" id="CHEBI:60039"/>
    </ligand>
</feature>
<feature type="binding site" evidence="1">
    <location>
        <position position="1151"/>
    </location>
    <ligand>
        <name>ATP</name>
        <dbReference type="ChEBI" id="CHEBI:30616"/>
    </ligand>
</feature>
<feature type="binding site" evidence="1">
    <location>
        <position position="1151"/>
    </location>
    <ligand>
        <name>L-proline</name>
        <dbReference type="ChEBI" id="CHEBI:60039"/>
    </ligand>
</feature>
<feature type="binding site" evidence="1">
    <location>
        <position position="1153"/>
    </location>
    <ligand>
        <name>ATP</name>
        <dbReference type="ChEBI" id="CHEBI:30616"/>
    </ligand>
</feature>
<feature type="binding site" evidence="1">
    <location>
        <position position="1162"/>
    </location>
    <ligand>
        <name>ATP</name>
        <dbReference type="ChEBI" id="CHEBI:30616"/>
    </ligand>
</feature>
<feature type="binding site" evidence="1">
    <location>
        <position position="1163"/>
    </location>
    <ligand>
        <name>ATP</name>
        <dbReference type="ChEBI" id="CHEBI:30616"/>
    </ligand>
</feature>
<feature type="binding site" evidence="1">
    <location>
        <position position="1236"/>
    </location>
    <ligand>
        <name>ATP</name>
        <dbReference type="ChEBI" id="CHEBI:30616"/>
    </ligand>
</feature>
<feature type="binding site" evidence="1">
    <location>
        <position position="1236"/>
    </location>
    <ligand>
        <name>Mg(2+)</name>
        <dbReference type="ChEBI" id="CHEBI:18420"/>
    </ligand>
</feature>
<feature type="binding site" evidence="1">
    <location>
        <position position="1239"/>
    </location>
    <ligand>
        <name>ATP</name>
        <dbReference type="ChEBI" id="CHEBI:30616"/>
    </ligand>
</feature>
<feature type="binding site" evidence="1">
    <location>
        <position position="1241"/>
    </location>
    <ligand>
        <name>L-proline</name>
        <dbReference type="ChEBI" id="CHEBI:60039"/>
    </ligand>
</feature>
<feature type="binding site" evidence="1">
    <location>
        <position position="1275"/>
    </location>
    <ligand>
        <name>ATP</name>
        <dbReference type="ChEBI" id="CHEBI:30616"/>
    </ligand>
</feature>
<feature type="binding site" evidence="1">
    <location>
        <position position="1277"/>
    </location>
    <ligand>
        <name>ATP</name>
        <dbReference type="ChEBI" id="CHEBI:30616"/>
    </ligand>
</feature>
<feature type="binding site" evidence="1">
    <location>
        <position position="1447"/>
    </location>
    <ligand>
        <name>Zn(2+)</name>
        <dbReference type="ChEBI" id="CHEBI:29105"/>
    </ligand>
</feature>
<feature type="binding site" evidence="1">
    <location>
        <position position="1452"/>
    </location>
    <ligand>
        <name>Zn(2+)</name>
        <dbReference type="ChEBI" id="CHEBI:29105"/>
    </ligand>
</feature>
<feature type="binding site" evidence="1">
    <location>
        <position position="1494"/>
    </location>
    <ligand>
        <name>Zn(2+)</name>
        <dbReference type="ChEBI" id="CHEBI:29105"/>
    </ligand>
</feature>
<feature type="binding site" evidence="1">
    <location>
        <position position="1496"/>
    </location>
    <ligand>
        <name>Zn(2+)</name>
        <dbReference type="ChEBI" id="CHEBI:29105"/>
    </ligand>
</feature>
<feature type="modified residue" description="N6-acetyllysine; alternate" evidence="1">
    <location>
        <position position="300"/>
    </location>
</feature>
<feature type="modified residue" description="N6-malonyllysine; alternate" evidence="1">
    <location>
        <position position="300"/>
    </location>
</feature>
<feature type="modified residue" description="Phosphothreonine" evidence="1">
    <location>
        <position position="355"/>
    </location>
</feature>
<feature type="modified residue" description="N6-acetyllysine" evidence="1">
    <location>
        <position position="417"/>
    </location>
</feature>
<feature type="modified residue" description="Phosphoserine" evidence="1">
    <location>
        <position position="434"/>
    </location>
</feature>
<feature type="modified residue" description="N6-acetyllysine" evidence="1">
    <location>
        <position position="498"/>
    </location>
</feature>
<feature type="modified residue" description="N6-acetyllysine" evidence="1">
    <location>
        <position position="535"/>
    </location>
</feature>
<feature type="modified residue" description="N6-acetyllysine" evidence="1">
    <location>
        <position position="542"/>
    </location>
</feature>
<feature type="modified residue" description="N6-acetyllysine" evidence="1">
    <location>
        <position position="637"/>
    </location>
</feature>
<feature type="modified residue" description="Phosphoserine" evidence="1">
    <location>
        <position position="746"/>
    </location>
</feature>
<feature type="modified residue" description="N6-acetyllysine" evidence="1">
    <location>
        <position position="787"/>
    </location>
</feature>
<feature type="modified residue" description="N6-acetyllysine" evidence="3">
    <location>
        <position position="860"/>
    </location>
</feature>
<feature type="modified residue" description="Phosphotyrosine" evidence="1">
    <location>
        <position position="871"/>
    </location>
</feature>
<feature type="modified residue" description="Phosphoserine; by CDK5" evidence="1">
    <location>
        <position position="885"/>
    </location>
</feature>
<feature type="modified residue" description="Phosphothreonine" evidence="1">
    <location>
        <position position="897"/>
    </location>
</feature>
<feature type="modified residue" description="Phosphoserine" evidence="1">
    <location>
        <position position="997"/>
    </location>
</feature>
<feature type="modified residue" description="Phosphoserine; by RPS6KB1" evidence="1">
    <location>
        <position position="998"/>
    </location>
</feature>
<feature type="modified residue" description="Phosphoserine" evidence="1">
    <location>
        <position position="999"/>
    </location>
</feature>
<feature type="modified residue" description="Omega-N-methylarginine" evidence="1">
    <location>
        <position position="1151"/>
    </location>
</feature>
<feature type="modified residue" description="Phosphoserine" evidence="1">
    <location>
        <position position="1349"/>
    </location>
</feature>
<feature type="modified residue" description="N6-acetyllysine" evidence="1">
    <location>
        <position position="1502"/>
    </location>
</feature>
<feature type="helix" evidence="9">
    <location>
        <begin position="827"/>
        <end position="841"/>
    </location>
</feature>
<feature type="helix" evidence="9">
    <location>
        <begin position="846"/>
        <end position="863"/>
    </location>
</feature>
<feature type="strand" evidence="9">
    <location>
        <begin position="865"/>
        <end position="870"/>
    </location>
</feature>